<reference key="1">
    <citation type="journal article" date="1992" name="Virology">
        <title>The phylogenetic relationship and complete nucleotide sequence of human papillomavirus type 35.</title>
        <authorList>
            <person name="Marich J.E."/>
            <person name="Pontsler A.V."/>
            <person name="Rice S.M."/>
            <person name="McGraw K.A."/>
            <person name="Dubensky T.W."/>
        </authorList>
    </citation>
    <scope>NUCLEOTIDE SEQUENCE [GENOMIC DNA]</scope>
</reference>
<organismHost>
    <name type="scientific">Homo sapiens</name>
    <name type="common">Human</name>
    <dbReference type="NCBI Taxonomy" id="9606"/>
</organismHost>
<dbReference type="EMBL" id="M74117">
    <property type="status" value="NOT_ANNOTATED_CDS"/>
    <property type="molecule type" value="Genomic_DNA"/>
</dbReference>
<dbReference type="SMR" id="P0DOW9"/>
<dbReference type="Proteomes" id="UP000113298">
    <property type="component" value="Genome"/>
</dbReference>
<dbReference type="GO" id="GO:0042025">
    <property type="term" value="C:host cell nucleus"/>
    <property type="evidence" value="ECO:0007669"/>
    <property type="project" value="UniProtKB-SubCell"/>
</dbReference>
<dbReference type="GO" id="GO:0003677">
    <property type="term" value="F:DNA binding"/>
    <property type="evidence" value="ECO:0007669"/>
    <property type="project" value="InterPro"/>
</dbReference>
<dbReference type="GO" id="GO:0003700">
    <property type="term" value="F:DNA-binding transcription factor activity"/>
    <property type="evidence" value="ECO:0007669"/>
    <property type="project" value="InterPro"/>
</dbReference>
<dbReference type="GO" id="GO:0006275">
    <property type="term" value="P:regulation of DNA replication"/>
    <property type="evidence" value="ECO:0007669"/>
    <property type="project" value="InterPro"/>
</dbReference>
<dbReference type="Gene3D" id="3.30.70.330">
    <property type="match status" value="1"/>
</dbReference>
<dbReference type="InterPro" id="IPR035975">
    <property type="entry name" value="E2/EBNA1_C_sf"/>
</dbReference>
<dbReference type="InterPro" id="IPR012677">
    <property type="entry name" value="Nucleotide-bd_a/b_plait_sf"/>
</dbReference>
<dbReference type="InterPro" id="IPR000427">
    <property type="entry name" value="Papillomavirus_E2_C"/>
</dbReference>
<dbReference type="Pfam" id="PF00511">
    <property type="entry name" value="PPV_E2_C"/>
    <property type="match status" value="1"/>
</dbReference>
<dbReference type="SUPFAM" id="SSF54957">
    <property type="entry name" value="Viral DNA-binding domain"/>
    <property type="match status" value="1"/>
</dbReference>
<accession>P0DOW9</accession>
<evidence type="ECO:0000250" key="1">
    <source>
        <dbReference type="UniProtKB" id="P0DKA0"/>
    </source>
</evidence>
<evidence type="ECO:0000256" key="2">
    <source>
        <dbReference type="SAM" id="MobiDB-lite"/>
    </source>
</evidence>
<evidence type="ECO:0000305" key="3"/>
<sequence length="178" mass="20116">MAILKWKYSRYNSSTELSTAEIATQLHAYNTTETHTKACSVGTTETQKTNHKRLRGGTELPYNPTKRVRLSAVDSVDRGVYSTSDCTNKDRCGSCSTTTPIVHLKGDANTLKCLRYRLGKYKALYQDASSTWRWTCTNDKKQIAIVTLTYTTEYQRDKFLTTVKIPNTVTVSKGYMSI</sequence>
<organism>
    <name type="scientific">Human papillomavirus 35</name>
    <dbReference type="NCBI Taxonomy" id="10587"/>
    <lineage>
        <taxon>Viruses</taxon>
        <taxon>Monodnaviria</taxon>
        <taxon>Shotokuvirae</taxon>
        <taxon>Cossaviricota</taxon>
        <taxon>Papovaviricetes</taxon>
        <taxon>Zurhausenvirales</taxon>
        <taxon>Papillomaviridae</taxon>
        <taxon>Firstpapillomavirinae</taxon>
        <taxon>Alphapapillomavirus</taxon>
        <taxon>Alphapapillomavirus 9</taxon>
    </lineage>
</organism>
<comment type="function">
    <text evidence="1">Plays a role in limiting the replication of viral DNA in keratinocytes. Recruits the host NCoR/SMRT complex to viral replication foci to mediate repression of both viral replication and transcription.</text>
</comment>
<comment type="subcellular location">
    <subcellularLocation>
        <location evidence="1">Host nucleus</location>
    </subcellularLocation>
</comment>
<comment type="similarity">
    <text evidence="3">Belongs to the papillomaviridae E8^E2C protein family.</text>
</comment>
<protein>
    <recommendedName>
        <fullName>Protein E8^E2C</fullName>
    </recommendedName>
</protein>
<name>VE8E2_HPV35</name>
<keyword id="KW-1048">Host nucleus</keyword>
<proteinExistence type="inferred from homology"/>
<feature type="chain" id="PRO_0000438754" description="Protein E8^E2C">
    <location>
        <begin position="1"/>
        <end position="178"/>
    </location>
</feature>
<feature type="region of interest" description="Disordered" evidence="2">
    <location>
        <begin position="40"/>
        <end position="60"/>
    </location>
</feature>